<evidence type="ECO:0000250" key="1"/>
<evidence type="ECO:0000255" key="2">
    <source>
        <dbReference type="HAMAP-Rule" id="MF_00130"/>
    </source>
</evidence>
<evidence type="ECO:0000305" key="3"/>
<dbReference type="EC" id="3.1.21.10" evidence="2"/>
<dbReference type="EMBL" id="AF222894">
    <property type="protein sequence ID" value="AAF30706.1"/>
    <property type="molecule type" value="Genomic_DNA"/>
</dbReference>
<dbReference type="RefSeq" id="WP_010891726.1">
    <property type="nucleotide sequence ID" value="NC_002162.1"/>
</dbReference>
<dbReference type="SMR" id="Q9PQJ4"/>
<dbReference type="STRING" id="273119.UU297"/>
<dbReference type="EnsemblBacteria" id="AAF30706">
    <property type="protein sequence ID" value="AAF30706"/>
    <property type="gene ID" value="UU297"/>
</dbReference>
<dbReference type="GeneID" id="29672508"/>
<dbReference type="KEGG" id="uur:UU297"/>
<dbReference type="PATRIC" id="fig|273119.6.peg.309"/>
<dbReference type="eggNOG" id="COG3331">
    <property type="taxonomic scope" value="Bacteria"/>
</dbReference>
<dbReference type="HOGENOM" id="CLU_096340_2_0_14"/>
<dbReference type="OrthoDB" id="9783592at2"/>
<dbReference type="Proteomes" id="UP000000423">
    <property type="component" value="Chromosome"/>
</dbReference>
<dbReference type="GO" id="GO:0005737">
    <property type="term" value="C:cytoplasm"/>
    <property type="evidence" value="ECO:0007669"/>
    <property type="project" value="UniProtKB-SubCell"/>
</dbReference>
<dbReference type="GO" id="GO:0004519">
    <property type="term" value="F:endonuclease activity"/>
    <property type="evidence" value="ECO:0007669"/>
    <property type="project" value="UniProtKB-UniRule"/>
</dbReference>
<dbReference type="GO" id="GO:0000287">
    <property type="term" value="F:magnesium ion binding"/>
    <property type="evidence" value="ECO:0007669"/>
    <property type="project" value="UniProtKB-UniRule"/>
</dbReference>
<dbReference type="GO" id="GO:0003676">
    <property type="term" value="F:nucleic acid binding"/>
    <property type="evidence" value="ECO:0007669"/>
    <property type="project" value="InterPro"/>
</dbReference>
<dbReference type="GO" id="GO:0007059">
    <property type="term" value="P:chromosome segregation"/>
    <property type="evidence" value="ECO:0007669"/>
    <property type="project" value="UniProtKB-UniRule"/>
</dbReference>
<dbReference type="GO" id="GO:0006310">
    <property type="term" value="P:DNA recombination"/>
    <property type="evidence" value="ECO:0007669"/>
    <property type="project" value="UniProtKB-UniRule"/>
</dbReference>
<dbReference type="GO" id="GO:0006281">
    <property type="term" value="P:DNA repair"/>
    <property type="evidence" value="ECO:0007669"/>
    <property type="project" value="UniProtKB-UniRule"/>
</dbReference>
<dbReference type="CDD" id="cd22354">
    <property type="entry name" value="RecU-like"/>
    <property type="match status" value="1"/>
</dbReference>
<dbReference type="Gene3D" id="3.40.1350.10">
    <property type="match status" value="1"/>
</dbReference>
<dbReference type="HAMAP" id="MF_00130">
    <property type="entry name" value="RecU"/>
    <property type="match status" value="1"/>
</dbReference>
<dbReference type="InterPro" id="IPR004612">
    <property type="entry name" value="Resolv_RecU"/>
</dbReference>
<dbReference type="InterPro" id="IPR011335">
    <property type="entry name" value="Restrct_endonuc-II-like"/>
</dbReference>
<dbReference type="InterPro" id="IPR011856">
    <property type="entry name" value="tRNA_endonuc-like_dom_sf"/>
</dbReference>
<dbReference type="Pfam" id="PF03838">
    <property type="entry name" value="RecU"/>
    <property type="match status" value="1"/>
</dbReference>
<dbReference type="SUPFAM" id="SSF52980">
    <property type="entry name" value="Restriction endonuclease-like"/>
    <property type="match status" value="1"/>
</dbReference>
<accession>Q9PQJ4</accession>
<reference key="1">
    <citation type="journal article" date="2000" name="Nature">
        <title>The complete sequence of the mucosal pathogen Ureaplasma urealyticum.</title>
        <authorList>
            <person name="Glass J.I."/>
            <person name="Lefkowitz E.J."/>
            <person name="Glass J.S."/>
            <person name="Heiner C.R."/>
            <person name="Chen E.Y."/>
            <person name="Cassell G.H."/>
        </authorList>
    </citation>
    <scope>NUCLEOTIDE SEQUENCE [LARGE SCALE GENOMIC DNA]</scope>
    <source>
        <strain>ATCC 700970</strain>
    </source>
</reference>
<gene>
    <name type="primary">recU</name>
    <name type="ordered locus">UU297</name>
</gene>
<comment type="function">
    <text evidence="1">Endonuclease that resolves Holliday junction intermediates in genetic recombination. Cleaves mobile four-strand junctions by introducing symmetrical nicks in paired strands. Promotes annealing of linear ssDNA with homologous dsDNA. Required for DNA repair, homologous recombination and chromosome segregation (By similarity).</text>
</comment>
<comment type="catalytic activity">
    <reaction evidence="2">
        <text>Endonucleolytic cleavage at a junction such as a reciprocal single-stranded crossover between two homologous DNA duplexes (Holliday junction).</text>
        <dbReference type="EC" id="3.1.21.10"/>
    </reaction>
</comment>
<comment type="cofactor">
    <cofactor evidence="1">
        <name>Mg(2+)</name>
        <dbReference type="ChEBI" id="CHEBI:18420"/>
    </cofactor>
    <text evidence="1">Binds 1 Mg(2+) ion per subunit.</text>
</comment>
<comment type="subcellular location">
    <subcellularLocation>
        <location evidence="1">Cytoplasm</location>
    </subcellularLocation>
</comment>
<comment type="similarity">
    <text evidence="3">Belongs to the RecU family.</text>
</comment>
<name>RECU_UREPA</name>
<keyword id="KW-0963">Cytoplasm</keyword>
<keyword id="KW-0227">DNA damage</keyword>
<keyword id="KW-0233">DNA recombination</keyword>
<keyword id="KW-0234">DNA repair</keyword>
<keyword id="KW-0255">Endonuclease</keyword>
<keyword id="KW-0378">Hydrolase</keyword>
<keyword id="KW-0460">Magnesium</keyword>
<keyword id="KW-0479">Metal-binding</keyword>
<keyword id="KW-0540">Nuclease</keyword>
<keyword id="KW-1185">Reference proteome</keyword>
<sequence>MNNKNNGMHLEVLINKSISLFNLQYQAFFKKRCVDIIIKNIDNSYVQGKIKQKSETDYYGFYKGDYFDFEAKQTNKNSFLIKQIQPHQLAHLYLIHKNSGFSFLIICFINYNLYFIITFQQLINYYQKTKRKSIPFQWFKDQCIELEIIFPGVINFKKMINDLKLKYYDD</sequence>
<organism>
    <name type="scientific">Ureaplasma parvum serovar 3 (strain ATCC 700970)</name>
    <dbReference type="NCBI Taxonomy" id="273119"/>
    <lineage>
        <taxon>Bacteria</taxon>
        <taxon>Bacillati</taxon>
        <taxon>Mycoplasmatota</taxon>
        <taxon>Mycoplasmoidales</taxon>
        <taxon>Mycoplasmoidaceae</taxon>
        <taxon>Ureaplasma</taxon>
    </lineage>
</organism>
<protein>
    <recommendedName>
        <fullName>Holliday junction resolvase RecU</fullName>
        <ecNumber evidence="2">3.1.21.10</ecNumber>
    </recommendedName>
    <alternativeName>
        <fullName>Recombination protein U homolog</fullName>
    </alternativeName>
</protein>
<feature type="chain" id="PRO_0000212320" description="Holliday junction resolvase RecU">
    <location>
        <begin position="1"/>
        <end position="170"/>
    </location>
</feature>
<feature type="binding site" evidence="1">
    <location>
        <position position="57"/>
    </location>
    <ligand>
        <name>Mg(2+)</name>
        <dbReference type="ChEBI" id="CHEBI:18420"/>
    </ligand>
</feature>
<feature type="binding site" evidence="1">
    <location>
        <position position="70"/>
    </location>
    <ligand>
        <name>Mg(2+)</name>
        <dbReference type="ChEBI" id="CHEBI:18420"/>
    </ligand>
</feature>
<feature type="binding site" evidence="1">
    <location>
        <position position="88"/>
    </location>
    <ligand>
        <name>Mg(2+)</name>
        <dbReference type="ChEBI" id="CHEBI:18420"/>
    </ligand>
</feature>
<feature type="site" description="Transition state stabilizer" evidence="1">
    <location>
        <position position="72"/>
    </location>
</feature>
<proteinExistence type="inferred from homology"/>